<gene>
    <name evidence="2" type="primary">infB</name>
    <name type="ordered locus">PERMA_0238</name>
</gene>
<evidence type="ECO:0000250" key="1"/>
<evidence type="ECO:0000255" key="2">
    <source>
        <dbReference type="HAMAP-Rule" id="MF_00100"/>
    </source>
</evidence>
<evidence type="ECO:0000256" key="3">
    <source>
        <dbReference type="SAM" id="MobiDB-lite"/>
    </source>
</evidence>
<reference key="1">
    <citation type="journal article" date="2009" name="J. Bacteriol.">
        <title>Complete and draft genome sequences of six members of the Aquificales.</title>
        <authorList>
            <person name="Reysenbach A.-L."/>
            <person name="Hamamura N."/>
            <person name="Podar M."/>
            <person name="Griffiths E."/>
            <person name="Ferreira S."/>
            <person name="Hochstein R."/>
            <person name="Heidelberg J."/>
            <person name="Johnson J."/>
            <person name="Mead D."/>
            <person name="Pohorille A."/>
            <person name="Sarmiento M."/>
            <person name="Schweighofer K."/>
            <person name="Seshadri R."/>
            <person name="Voytek M.A."/>
        </authorList>
    </citation>
    <scope>NUCLEOTIDE SEQUENCE [LARGE SCALE GENOMIC DNA]</scope>
    <source>
        <strain>DSM 14350 / EX-H1</strain>
    </source>
</reference>
<dbReference type="EMBL" id="CP001230">
    <property type="protein sequence ID" value="ACO04790.1"/>
    <property type="molecule type" value="Genomic_DNA"/>
</dbReference>
<dbReference type="RefSeq" id="WP_015898894.1">
    <property type="nucleotide sequence ID" value="NC_012440.1"/>
</dbReference>
<dbReference type="SMR" id="C0QTL9"/>
<dbReference type="STRING" id="123214.PERMA_0238"/>
<dbReference type="PaxDb" id="123214-PERMA_0238"/>
<dbReference type="KEGG" id="pmx:PERMA_0238"/>
<dbReference type="eggNOG" id="COG0532">
    <property type="taxonomic scope" value="Bacteria"/>
</dbReference>
<dbReference type="HOGENOM" id="CLU_006301_5_1_0"/>
<dbReference type="OrthoDB" id="9811804at2"/>
<dbReference type="Proteomes" id="UP000001366">
    <property type="component" value="Chromosome"/>
</dbReference>
<dbReference type="GO" id="GO:0005829">
    <property type="term" value="C:cytosol"/>
    <property type="evidence" value="ECO:0007669"/>
    <property type="project" value="TreeGrafter"/>
</dbReference>
<dbReference type="GO" id="GO:0005525">
    <property type="term" value="F:GTP binding"/>
    <property type="evidence" value="ECO:0007669"/>
    <property type="project" value="UniProtKB-KW"/>
</dbReference>
<dbReference type="GO" id="GO:0003924">
    <property type="term" value="F:GTPase activity"/>
    <property type="evidence" value="ECO:0007669"/>
    <property type="project" value="UniProtKB-UniRule"/>
</dbReference>
<dbReference type="GO" id="GO:0003743">
    <property type="term" value="F:translation initiation factor activity"/>
    <property type="evidence" value="ECO:0007669"/>
    <property type="project" value="UniProtKB-UniRule"/>
</dbReference>
<dbReference type="CDD" id="cd01887">
    <property type="entry name" value="IF2_eIF5B"/>
    <property type="match status" value="1"/>
</dbReference>
<dbReference type="CDD" id="cd03702">
    <property type="entry name" value="IF2_mtIF2_II"/>
    <property type="match status" value="1"/>
</dbReference>
<dbReference type="CDD" id="cd03692">
    <property type="entry name" value="mtIF2_IVc"/>
    <property type="match status" value="1"/>
</dbReference>
<dbReference type="FunFam" id="2.40.30.10:FF:000007">
    <property type="entry name" value="Translation initiation factor IF-2"/>
    <property type="match status" value="1"/>
</dbReference>
<dbReference type="FunFam" id="2.40.30.10:FF:000008">
    <property type="entry name" value="Translation initiation factor IF-2"/>
    <property type="match status" value="1"/>
</dbReference>
<dbReference type="FunFam" id="3.40.50.10050:FF:000001">
    <property type="entry name" value="Translation initiation factor IF-2"/>
    <property type="match status" value="1"/>
</dbReference>
<dbReference type="FunFam" id="3.40.50.300:FF:000019">
    <property type="entry name" value="Translation initiation factor IF-2"/>
    <property type="match status" value="1"/>
</dbReference>
<dbReference type="Gene3D" id="1.10.10.2480">
    <property type="match status" value="1"/>
</dbReference>
<dbReference type="Gene3D" id="3.40.50.300">
    <property type="entry name" value="P-loop containing nucleotide triphosphate hydrolases"/>
    <property type="match status" value="1"/>
</dbReference>
<dbReference type="Gene3D" id="2.40.30.10">
    <property type="entry name" value="Translation factors"/>
    <property type="match status" value="2"/>
</dbReference>
<dbReference type="Gene3D" id="3.40.50.10050">
    <property type="entry name" value="Translation initiation factor IF- 2, domain 3"/>
    <property type="match status" value="1"/>
</dbReference>
<dbReference type="HAMAP" id="MF_00100_B">
    <property type="entry name" value="IF_2_B"/>
    <property type="match status" value="1"/>
</dbReference>
<dbReference type="InterPro" id="IPR053905">
    <property type="entry name" value="EF-G-like_DII"/>
</dbReference>
<dbReference type="InterPro" id="IPR004161">
    <property type="entry name" value="EFTu-like_2"/>
</dbReference>
<dbReference type="InterPro" id="IPR044145">
    <property type="entry name" value="IF2_II"/>
</dbReference>
<dbReference type="InterPro" id="IPR006847">
    <property type="entry name" value="IF2_N"/>
</dbReference>
<dbReference type="InterPro" id="IPR027417">
    <property type="entry name" value="P-loop_NTPase"/>
</dbReference>
<dbReference type="InterPro" id="IPR005225">
    <property type="entry name" value="Small_GTP-bd"/>
</dbReference>
<dbReference type="InterPro" id="IPR000795">
    <property type="entry name" value="T_Tr_GTP-bd_dom"/>
</dbReference>
<dbReference type="InterPro" id="IPR000178">
    <property type="entry name" value="TF_IF2_bacterial-like"/>
</dbReference>
<dbReference type="InterPro" id="IPR015760">
    <property type="entry name" value="TIF_IF2"/>
</dbReference>
<dbReference type="InterPro" id="IPR023115">
    <property type="entry name" value="TIF_IF2_dom3"/>
</dbReference>
<dbReference type="InterPro" id="IPR036925">
    <property type="entry name" value="TIF_IF2_dom3_sf"/>
</dbReference>
<dbReference type="InterPro" id="IPR009000">
    <property type="entry name" value="Transl_B-barrel_sf"/>
</dbReference>
<dbReference type="NCBIfam" id="TIGR00487">
    <property type="entry name" value="IF-2"/>
    <property type="match status" value="1"/>
</dbReference>
<dbReference type="NCBIfam" id="TIGR00231">
    <property type="entry name" value="small_GTP"/>
    <property type="match status" value="1"/>
</dbReference>
<dbReference type="PANTHER" id="PTHR43381:SF5">
    <property type="entry name" value="TR-TYPE G DOMAIN-CONTAINING PROTEIN"/>
    <property type="match status" value="1"/>
</dbReference>
<dbReference type="PANTHER" id="PTHR43381">
    <property type="entry name" value="TRANSLATION INITIATION FACTOR IF-2-RELATED"/>
    <property type="match status" value="1"/>
</dbReference>
<dbReference type="Pfam" id="PF22042">
    <property type="entry name" value="EF-G_D2"/>
    <property type="match status" value="1"/>
</dbReference>
<dbReference type="Pfam" id="PF00009">
    <property type="entry name" value="GTP_EFTU"/>
    <property type="match status" value="1"/>
</dbReference>
<dbReference type="Pfam" id="PF03144">
    <property type="entry name" value="GTP_EFTU_D2"/>
    <property type="match status" value="1"/>
</dbReference>
<dbReference type="Pfam" id="PF11987">
    <property type="entry name" value="IF-2"/>
    <property type="match status" value="1"/>
</dbReference>
<dbReference type="Pfam" id="PF04760">
    <property type="entry name" value="IF2_N"/>
    <property type="match status" value="2"/>
</dbReference>
<dbReference type="SUPFAM" id="SSF52156">
    <property type="entry name" value="Initiation factor IF2/eIF5b, domain 3"/>
    <property type="match status" value="1"/>
</dbReference>
<dbReference type="SUPFAM" id="SSF52540">
    <property type="entry name" value="P-loop containing nucleoside triphosphate hydrolases"/>
    <property type="match status" value="1"/>
</dbReference>
<dbReference type="SUPFAM" id="SSF50447">
    <property type="entry name" value="Translation proteins"/>
    <property type="match status" value="2"/>
</dbReference>
<dbReference type="PROSITE" id="PS51722">
    <property type="entry name" value="G_TR_2"/>
    <property type="match status" value="1"/>
</dbReference>
<dbReference type="PROSITE" id="PS01176">
    <property type="entry name" value="IF2"/>
    <property type="match status" value="1"/>
</dbReference>
<comment type="function">
    <text evidence="2">One of the essential components for the initiation of protein synthesis. Protects formylmethionyl-tRNA from spontaneous hydrolysis and promotes its binding to the 30S ribosomal subunits. Also involved in the hydrolysis of GTP during the formation of the 70S ribosomal complex.</text>
</comment>
<comment type="subcellular location">
    <subcellularLocation>
        <location evidence="2">Cytoplasm</location>
    </subcellularLocation>
</comment>
<comment type="similarity">
    <text evidence="2">Belongs to the TRAFAC class translation factor GTPase superfamily. Classic translation factor GTPase family. IF-2 subfamily.</text>
</comment>
<name>IF2_PERMH</name>
<protein>
    <recommendedName>
        <fullName evidence="2">Translation initiation factor IF-2</fullName>
    </recommendedName>
</protein>
<proteinExistence type="inferred from homology"/>
<feature type="chain" id="PRO_1000118770" description="Translation initiation factor IF-2">
    <location>
        <begin position="1"/>
        <end position="875"/>
    </location>
</feature>
<feature type="domain" description="tr-type G">
    <location>
        <begin position="379"/>
        <end position="547"/>
    </location>
</feature>
<feature type="region of interest" description="Disordered" evidence="3">
    <location>
        <begin position="123"/>
        <end position="204"/>
    </location>
</feature>
<feature type="region of interest" description="Disordered" evidence="3">
    <location>
        <begin position="240"/>
        <end position="278"/>
    </location>
</feature>
<feature type="region of interest" description="G1" evidence="1">
    <location>
        <begin position="388"/>
        <end position="395"/>
    </location>
</feature>
<feature type="region of interest" description="G2" evidence="1">
    <location>
        <begin position="413"/>
        <end position="417"/>
    </location>
</feature>
<feature type="region of interest" description="G3" evidence="1">
    <location>
        <begin position="435"/>
        <end position="438"/>
    </location>
</feature>
<feature type="region of interest" description="G4" evidence="1">
    <location>
        <begin position="489"/>
        <end position="492"/>
    </location>
</feature>
<feature type="region of interest" description="G5" evidence="1">
    <location>
        <begin position="525"/>
        <end position="527"/>
    </location>
</feature>
<feature type="compositionally biased region" description="Basic and acidic residues" evidence="3">
    <location>
        <begin position="240"/>
        <end position="252"/>
    </location>
</feature>
<feature type="compositionally biased region" description="Basic residues" evidence="3">
    <location>
        <begin position="259"/>
        <end position="268"/>
    </location>
</feature>
<feature type="compositionally biased region" description="Basic and acidic residues" evidence="3">
    <location>
        <begin position="269"/>
        <end position="278"/>
    </location>
</feature>
<feature type="binding site" evidence="2">
    <location>
        <begin position="388"/>
        <end position="395"/>
    </location>
    <ligand>
        <name>GTP</name>
        <dbReference type="ChEBI" id="CHEBI:37565"/>
    </ligand>
</feature>
<feature type="binding site" evidence="2">
    <location>
        <begin position="435"/>
        <end position="439"/>
    </location>
    <ligand>
        <name>GTP</name>
        <dbReference type="ChEBI" id="CHEBI:37565"/>
    </ligand>
</feature>
<feature type="binding site" evidence="2">
    <location>
        <begin position="489"/>
        <end position="492"/>
    </location>
    <ligand>
        <name>GTP</name>
        <dbReference type="ChEBI" id="CHEBI:37565"/>
    </ligand>
</feature>
<sequence>MSKIKISDLAKEFGMTWKELAGEIEELTGKTVKSPSTKIDEEIVSLLRDVLQPAEEVEEAVEKKVEKEKGYRIFELSHDWNIPFEELAEDLKAIGYTKSIDNFTILDEETVNRLKDYIKEKKEKEKEKKKEEKEEKKVKVEKKVEEKPVEVKKEEKKEEKVEKVEKKEEKVQKKPEKKEVKRKEKIVAKEEKPERKKAVEEKPKKKEVKEVKKVEKPKVEVVEEKEETKIKIPEAEIRKETKEEKAELEALRKLMGPQPKKKKKKKKKKEEEKAPVETKEKEEELKIAIIPEVVTVRELSDILDMPVNEIMAELLKRGILATVNQTIDPEIALQIAEEHGYLAEIQKEGEEVKIVEELPQEEKKKLLGEEEEEEENLVERPPVVTVMGHVDHGKTTLLDTIRKTDVAAKEKGGITQHIGAYKIKLSNGKEITFLDTPGHEAFTTLRARGSKVADIAVLVVAADDGVKPQTVEAINHAKSAGVPIIVAINKIDKPGADPERVKRELAQYELIPEEWGGDTIMVPVSAKTGQNVEELLENILLVSEILELKANPNRPAIGTIIESKLDPKRGPVATVLIENGTLHQGDYFVAGFTWGKVRAMFDERGRQVKEATPGTPVEVLGFNEVPQAGDKFVVKPSEREARLLAEQRKQKYEEELQAKRTRIHLENLKDVKEINIILKADVQGSLEAITKSIEELSEKFEDVTINIIHSGIGAITESDVMLAAASNALIIGFNVRPDASARKAAEEEDVDIKIYGIIYDLIDDLEKALKGMLTPKEREVLLGICEVKQIFRIKGVGTVAGCMVTEGVIRRNAKARLVRDGVVIYDGEITSLKRFKEDVKEVAKGYECGLMLKDFNDIKPGDQIEAYEIVQEKAE</sequence>
<organism>
    <name type="scientific">Persephonella marina (strain DSM 14350 / EX-H1)</name>
    <dbReference type="NCBI Taxonomy" id="123214"/>
    <lineage>
        <taxon>Bacteria</taxon>
        <taxon>Pseudomonadati</taxon>
        <taxon>Aquificota</taxon>
        <taxon>Aquificia</taxon>
        <taxon>Aquificales</taxon>
        <taxon>Hydrogenothermaceae</taxon>
        <taxon>Persephonella</taxon>
    </lineage>
</organism>
<keyword id="KW-0963">Cytoplasm</keyword>
<keyword id="KW-0342">GTP-binding</keyword>
<keyword id="KW-0396">Initiation factor</keyword>
<keyword id="KW-0547">Nucleotide-binding</keyword>
<keyword id="KW-0648">Protein biosynthesis</keyword>
<keyword id="KW-1185">Reference proteome</keyword>
<accession>C0QTL9</accession>